<feature type="chain" id="PRO_1000133863" description="Large ribosomal subunit protein bL12">
    <location>
        <begin position="1"/>
        <end position="122"/>
    </location>
</feature>
<organism>
    <name type="scientific">Streptococcus pneumoniae (strain 70585)</name>
    <dbReference type="NCBI Taxonomy" id="488221"/>
    <lineage>
        <taxon>Bacteria</taxon>
        <taxon>Bacillati</taxon>
        <taxon>Bacillota</taxon>
        <taxon>Bacilli</taxon>
        <taxon>Lactobacillales</taxon>
        <taxon>Streptococcaceae</taxon>
        <taxon>Streptococcus</taxon>
    </lineage>
</organism>
<name>RL7_STRP7</name>
<dbReference type="EMBL" id="CP000918">
    <property type="protein sequence ID" value="ACO15868.1"/>
    <property type="molecule type" value="Genomic_DNA"/>
</dbReference>
<dbReference type="RefSeq" id="WP_001196960.1">
    <property type="nucleotide sequence ID" value="NC_012468.1"/>
</dbReference>
<dbReference type="SMR" id="C1C7V4"/>
<dbReference type="GeneID" id="45653386"/>
<dbReference type="KEGG" id="snm:SP70585_1392"/>
<dbReference type="HOGENOM" id="CLU_086499_3_2_9"/>
<dbReference type="Proteomes" id="UP000002211">
    <property type="component" value="Chromosome"/>
</dbReference>
<dbReference type="GO" id="GO:0022625">
    <property type="term" value="C:cytosolic large ribosomal subunit"/>
    <property type="evidence" value="ECO:0007669"/>
    <property type="project" value="TreeGrafter"/>
</dbReference>
<dbReference type="GO" id="GO:0003729">
    <property type="term" value="F:mRNA binding"/>
    <property type="evidence" value="ECO:0007669"/>
    <property type="project" value="TreeGrafter"/>
</dbReference>
<dbReference type="GO" id="GO:0003735">
    <property type="term" value="F:structural constituent of ribosome"/>
    <property type="evidence" value="ECO:0007669"/>
    <property type="project" value="InterPro"/>
</dbReference>
<dbReference type="GO" id="GO:0006412">
    <property type="term" value="P:translation"/>
    <property type="evidence" value="ECO:0007669"/>
    <property type="project" value="UniProtKB-UniRule"/>
</dbReference>
<dbReference type="CDD" id="cd00387">
    <property type="entry name" value="Ribosomal_L7_L12"/>
    <property type="match status" value="1"/>
</dbReference>
<dbReference type="FunFam" id="1.20.5.710:FF:000002">
    <property type="entry name" value="50S ribosomal protein L7/L12"/>
    <property type="match status" value="1"/>
</dbReference>
<dbReference type="FunFam" id="3.30.1390.10:FF:000001">
    <property type="entry name" value="50S ribosomal protein L7/L12"/>
    <property type="match status" value="1"/>
</dbReference>
<dbReference type="Gene3D" id="3.30.1390.10">
    <property type="match status" value="1"/>
</dbReference>
<dbReference type="Gene3D" id="1.20.5.710">
    <property type="entry name" value="Single helix bin"/>
    <property type="match status" value="1"/>
</dbReference>
<dbReference type="HAMAP" id="MF_00368">
    <property type="entry name" value="Ribosomal_bL12"/>
    <property type="match status" value="1"/>
</dbReference>
<dbReference type="InterPro" id="IPR000206">
    <property type="entry name" value="Ribosomal_bL12"/>
</dbReference>
<dbReference type="InterPro" id="IPR013823">
    <property type="entry name" value="Ribosomal_bL12_C"/>
</dbReference>
<dbReference type="InterPro" id="IPR014719">
    <property type="entry name" value="Ribosomal_bL12_C/ClpS-like"/>
</dbReference>
<dbReference type="InterPro" id="IPR008932">
    <property type="entry name" value="Ribosomal_bL12_oligo"/>
</dbReference>
<dbReference type="InterPro" id="IPR036235">
    <property type="entry name" value="Ribosomal_bL12_oligo_N_sf"/>
</dbReference>
<dbReference type="NCBIfam" id="TIGR00855">
    <property type="entry name" value="L12"/>
    <property type="match status" value="1"/>
</dbReference>
<dbReference type="PANTHER" id="PTHR45987">
    <property type="entry name" value="39S RIBOSOMAL PROTEIN L12"/>
    <property type="match status" value="1"/>
</dbReference>
<dbReference type="PANTHER" id="PTHR45987:SF4">
    <property type="entry name" value="LARGE RIBOSOMAL SUBUNIT PROTEIN BL12M"/>
    <property type="match status" value="1"/>
</dbReference>
<dbReference type="Pfam" id="PF00542">
    <property type="entry name" value="Ribosomal_L12"/>
    <property type="match status" value="1"/>
</dbReference>
<dbReference type="Pfam" id="PF16320">
    <property type="entry name" value="Ribosomal_L12_N"/>
    <property type="match status" value="1"/>
</dbReference>
<dbReference type="SUPFAM" id="SSF54736">
    <property type="entry name" value="ClpS-like"/>
    <property type="match status" value="1"/>
</dbReference>
<dbReference type="SUPFAM" id="SSF48300">
    <property type="entry name" value="Ribosomal protein L7/12, oligomerisation (N-terminal) domain"/>
    <property type="match status" value="1"/>
</dbReference>
<proteinExistence type="inferred from homology"/>
<evidence type="ECO:0000255" key="1">
    <source>
        <dbReference type="HAMAP-Rule" id="MF_00368"/>
    </source>
</evidence>
<evidence type="ECO:0000305" key="2"/>
<sequence length="122" mass="12442">MALNIENIIAEIKEASILELNDLVKAIEEEFGVTAAAPVAVAAADAADAGAAKDSFDVELTSAGDKKVGVIKVVREITGLGLKEAKELVDGAPALVKEGVATAEAEEIKAKLEEAGASVTLK</sequence>
<protein>
    <recommendedName>
        <fullName evidence="1">Large ribosomal subunit protein bL12</fullName>
    </recommendedName>
    <alternativeName>
        <fullName evidence="2">50S ribosomal protein L7/L12</fullName>
    </alternativeName>
</protein>
<keyword id="KW-0687">Ribonucleoprotein</keyword>
<keyword id="KW-0689">Ribosomal protein</keyword>
<reference key="1">
    <citation type="journal article" date="2010" name="Genome Biol.">
        <title>Structure and dynamics of the pan-genome of Streptococcus pneumoniae and closely related species.</title>
        <authorList>
            <person name="Donati C."/>
            <person name="Hiller N.L."/>
            <person name="Tettelin H."/>
            <person name="Muzzi A."/>
            <person name="Croucher N.J."/>
            <person name="Angiuoli S.V."/>
            <person name="Oggioni M."/>
            <person name="Dunning Hotopp J.C."/>
            <person name="Hu F.Z."/>
            <person name="Riley D.R."/>
            <person name="Covacci A."/>
            <person name="Mitchell T.J."/>
            <person name="Bentley S.D."/>
            <person name="Kilian M."/>
            <person name="Ehrlich G.D."/>
            <person name="Rappuoli R."/>
            <person name="Moxon E.R."/>
            <person name="Masignani V."/>
        </authorList>
    </citation>
    <scope>NUCLEOTIDE SEQUENCE [LARGE SCALE GENOMIC DNA]</scope>
    <source>
        <strain>70585</strain>
    </source>
</reference>
<gene>
    <name evidence="1" type="primary">rplL</name>
    <name type="ordered locus">SP70585_1392</name>
</gene>
<comment type="function">
    <text evidence="1">Forms part of the ribosomal stalk which helps the ribosome interact with GTP-bound translation factors. Is thus essential for accurate translation.</text>
</comment>
<comment type="subunit">
    <text evidence="1">Homodimer. Part of the ribosomal stalk of the 50S ribosomal subunit. Forms a multimeric L10(L12)X complex, where L10 forms an elongated spine to which 2 to 4 L12 dimers bind in a sequential fashion. Binds GTP-bound translation factors.</text>
</comment>
<comment type="similarity">
    <text evidence="1">Belongs to the bacterial ribosomal protein bL12 family.</text>
</comment>
<accession>C1C7V4</accession>